<keyword id="KW-0678">Repressor</keyword>
<keyword id="KW-0687">Ribonucleoprotein</keyword>
<keyword id="KW-0689">Ribosomal protein</keyword>
<keyword id="KW-0694">RNA-binding</keyword>
<keyword id="KW-0699">rRNA-binding</keyword>
<keyword id="KW-0810">Translation regulation</keyword>
<keyword id="KW-0820">tRNA-binding</keyword>
<comment type="function">
    <text evidence="1">Binds directly to 23S rRNA. The L1 stalk is quite mobile in the ribosome, and is involved in E site tRNA release.</text>
</comment>
<comment type="function">
    <text evidence="1">Protein L1 is also a translational repressor protein, it controls the translation of the L11 operon by binding to its mRNA.</text>
</comment>
<comment type="subunit">
    <text evidence="1">Part of the 50S ribosomal subunit.</text>
</comment>
<comment type="similarity">
    <text evidence="1">Belongs to the universal ribosomal protein uL1 family.</text>
</comment>
<sequence>MAKISKRMKEISAKIDAEKKYPVSEAFDILRDVSSVKFVESVDVSVALGVDPRKSDQVVRGASVLPNGTGKTVRVAVFAKGPAADAAKEAGADVVGMEDLADEVKKGNMDFDVVIASPDSMRVVGQLGQILGPKGLMPNPKVGTVTMDVAKAVRDAKAGQVRYRVDKAGIIHTTIGKVNFTSDALKQNLEQLLTDLKKAKPSVSKGIYLKKVSVSSTMGPGISVDFSDLNI</sequence>
<reference key="1">
    <citation type="submission" date="2007-12" db="EMBL/GenBank/DDBJ databases">
        <title>Complete sequence of chromosome of Francisella philomiragia subsp. philomiragia ATCC 25017.</title>
        <authorList>
            <consortium name="US DOE Joint Genome Institute"/>
            <person name="Copeland A."/>
            <person name="Lucas S."/>
            <person name="Lapidus A."/>
            <person name="Barry K."/>
            <person name="Detter J.C."/>
            <person name="Glavina del Rio T."/>
            <person name="Hammon N."/>
            <person name="Israni S."/>
            <person name="Dalin E."/>
            <person name="Tice H."/>
            <person name="Pitluck S."/>
            <person name="Chain P."/>
            <person name="Malfatti S."/>
            <person name="Shin M."/>
            <person name="Vergez L."/>
            <person name="Schmutz J."/>
            <person name="Larimer F."/>
            <person name="Land M."/>
            <person name="Hauser L."/>
            <person name="Richardson P."/>
        </authorList>
    </citation>
    <scope>NUCLEOTIDE SEQUENCE [LARGE SCALE GENOMIC DNA]</scope>
    <source>
        <strain>ATCC 25017 / CCUG 19701 / FSC 153 / O#319-036</strain>
    </source>
</reference>
<organism>
    <name type="scientific">Francisella philomiragia subsp. philomiragia (strain ATCC 25017 / CCUG 19701 / FSC 153 / O#319-036)</name>
    <dbReference type="NCBI Taxonomy" id="484022"/>
    <lineage>
        <taxon>Bacteria</taxon>
        <taxon>Pseudomonadati</taxon>
        <taxon>Pseudomonadota</taxon>
        <taxon>Gammaproteobacteria</taxon>
        <taxon>Thiotrichales</taxon>
        <taxon>Francisellaceae</taxon>
        <taxon>Francisella</taxon>
    </lineage>
</organism>
<name>RL1_FRAP2</name>
<gene>
    <name evidence="1" type="primary">rplA</name>
    <name type="ordered locus">Fphi_1043</name>
</gene>
<feature type="chain" id="PRO_1000086286" description="Large ribosomal subunit protein uL1">
    <location>
        <begin position="1"/>
        <end position="231"/>
    </location>
</feature>
<protein>
    <recommendedName>
        <fullName evidence="1">Large ribosomal subunit protein uL1</fullName>
    </recommendedName>
    <alternativeName>
        <fullName evidence="2">50S ribosomal protein L1</fullName>
    </alternativeName>
</protein>
<accession>B0TX07</accession>
<proteinExistence type="inferred from homology"/>
<evidence type="ECO:0000255" key="1">
    <source>
        <dbReference type="HAMAP-Rule" id="MF_01318"/>
    </source>
</evidence>
<evidence type="ECO:0000305" key="2"/>
<dbReference type="EMBL" id="CP000937">
    <property type="protein sequence ID" value="ABZ87265.1"/>
    <property type="molecule type" value="Genomic_DNA"/>
</dbReference>
<dbReference type="SMR" id="B0TX07"/>
<dbReference type="KEGG" id="fph:Fphi_1043"/>
<dbReference type="eggNOG" id="COG0081">
    <property type="taxonomic scope" value="Bacteria"/>
</dbReference>
<dbReference type="HOGENOM" id="CLU_062853_0_0_6"/>
<dbReference type="GO" id="GO:0022625">
    <property type="term" value="C:cytosolic large ribosomal subunit"/>
    <property type="evidence" value="ECO:0007669"/>
    <property type="project" value="TreeGrafter"/>
</dbReference>
<dbReference type="GO" id="GO:0019843">
    <property type="term" value="F:rRNA binding"/>
    <property type="evidence" value="ECO:0007669"/>
    <property type="project" value="UniProtKB-UniRule"/>
</dbReference>
<dbReference type="GO" id="GO:0003735">
    <property type="term" value="F:structural constituent of ribosome"/>
    <property type="evidence" value="ECO:0007669"/>
    <property type="project" value="InterPro"/>
</dbReference>
<dbReference type="GO" id="GO:0000049">
    <property type="term" value="F:tRNA binding"/>
    <property type="evidence" value="ECO:0007669"/>
    <property type="project" value="UniProtKB-KW"/>
</dbReference>
<dbReference type="GO" id="GO:0006417">
    <property type="term" value="P:regulation of translation"/>
    <property type="evidence" value="ECO:0007669"/>
    <property type="project" value="UniProtKB-KW"/>
</dbReference>
<dbReference type="GO" id="GO:0006412">
    <property type="term" value="P:translation"/>
    <property type="evidence" value="ECO:0007669"/>
    <property type="project" value="UniProtKB-UniRule"/>
</dbReference>
<dbReference type="CDD" id="cd00403">
    <property type="entry name" value="Ribosomal_L1"/>
    <property type="match status" value="1"/>
</dbReference>
<dbReference type="FunFam" id="3.40.50.790:FF:000001">
    <property type="entry name" value="50S ribosomal protein L1"/>
    <property type="match status" value="1"/>
</dbReference>
<dbReference type="Gene3D" id="3.30.190.20">
    <property type="match status" value="1"/>
</dbReference>
<dbReference type="Gene3D" id="3.40.50.790">
    <property type="match status" value="1"/>
</dbReference>
<dbReference type="HAMAP" id="MF_01318_B">
    <property type="entry name" value="Ribosomal_uL1_B"/>
    <property type="match status" value="1"/>
</dbReference>
<dbReference type="InterPro" id="IPR005878">
    <property type="entry name" value="Ribosom_uL1_bac-type"/>
</dbReference>
<dbReference type="InterPro" id="IPR002143">
    <property type="entry name" value="Ribosomal_uL1"/>
</dbReference>
<dbReference type="InterPro" id="IPR023674">
    <property type="entry name" value="Ribosomal_uL1-like"/>
</dbReference>
<dbReference type="InterPro" id="IPR028364">
    <property type="entry name" value="Ribosomal_uL1/biogenesis"/>
</dbReference>
<dbReference type="InterPro" id="IPR016095">
    <property type="entry name" value="Ribosomal_uL1_3-a/b-sand"/>
</dbReference>
<dbReference type="InterPro" id="IPR023673">
    <property type="entry name" value="Ribosomal_uL1_CS"/>
</dbReference>
<dbReference type="NCBIfam" id="TIGR01169">
    <property type="entry name" value="rplA_bact"/>
    <property type="match status" value="1"/>
</dbReference>
<dbReference type="PANTHER" id="PTHR36427">
    <property type="entry name" value="54S RIBOSOMAL PROTEIN L1, MITOCHONDRIAL"/>
    <property type="match status" value="1"/>
</dbReference>
<dbReference type="PANTHER" id="PTHR36427:SF3">
    <property type="entry name" value="LARGE RIBOSOMAL SUBUNIT PROTEIN UL1M"/>
    <property type="match status" value="1"/>
</dbReference>
<dbReference type="Pfam" id="PF00687">
    <property type="entry name" value="Ribosomal_L1"/>
    <property type="match status" value="1"/>
</dbReference>
<dbReference type="PIRSF" id="PIRSF002155">
    <property type="entry name" value="Ribosomal_L1"/>
    <property type="match status" value="1"/>
</dbReference>
<dbReference type="SUPFAM" id="SSF56808">
    <property type="entry name" value="Ribosomal protein L1"/>
    <property type="match status" value="1"/>
</dbReference>
<dbReference type="PROSITE" id="PS01199">
    <property type="entry name" value="RIBOSOMAL_L1"/>
    <property type="match status" value="1"/>
</dbReference>